<accession>B7NMP9</accession>
<reference key="1">
    <citation type="journal article" date="2009" name="PLoS Genet.">
        <title>Organised genome dynamics in the Escherichia coli species results in highly diverse adaptive paths.</title>
        <authorList>
            <person name="Touchon M."/>
            <person name="Hoede C."/>
            <person name="Tenaillon O."/>
            <person name="Barbe V."/>
            <person name="Baeriswyl S."/>
            <person name="Bidet P."/>
            <person name="Bingen E."/>
            <person name="Bonacorsi S."/>
            <person name="Bouchier C."/>
            <person name="Bouvet O."/>
            <person name="Calteau A."/>
            <person name="Chiapello H."/>
            <person name="Clermont O."/>
            <person name="Cruveiller S."/>
            <person name="Danchin A."/>
            <person name="Diard M."/>
            <person name="Dossat C."/>
            <person name="Karoui M.E."/>
            <person name="Frapy E."/>
            <person name="Garry L."/>
            <person name="Ghigo J.M."/>
            <person name="Gilles A.M."/>
            <person name="Johnson J."/>
            <person name="Le Bouguenec C."/>
            <person name="Lescat M."/>
            <person name="Mangenot S."/>
            <person name="Martinez-Jehanne V."/>
            <person name="Matic I."/>
            <person name="Nassif X."/>
            <person name="Oztas S."/>
            <person name="Petit M.A."/>
            <person name="Pichon C."/>
            <person name="Rouy Z."/>
            <person name="Ruf C.S."/>
            <person name="Schneider D."/>
            <person name="Tourret J."/>
            <person name="Vacherie B."/>
            <person name="Vallenet D."/>
            <person name="Medigue C."/>
            <person name="Rocha E.P.C."/>
            <person name="Denamur E."/>
        </authorList>
    </citation>
    <scope>NUCLEOTIDE SEQUENCE [LARGE SCALE GENOMIC DNA]</scope>
    <source>
        <strain>IAI39 / ExPEC</strain>
    </source>
</reference>
<sequence>MSGLRPALSTFLFLLLITGGVYPLLTTALGQWWFPWQANGSLIREGDTVRGSALIGQNFTGNGYFHGRPSATAEMPYNPQASGGSNLAVSNPELDKQIAARVAALRAANPDASTSVPVELVTASASGLDNNITPQAAAWQIPRVAKARNLSVEQLTQLIAKYSQQPLVNYIGQPVVNIVELNLALDKLDE</sequence>
<organism>
    <name type="scientific">Escherichia coli O7:K1 (strain IAI39 / ExPEC)</name>
    <dbReference type="NCBI Taxonomy" id="585057"/>
    <lineage>
        <taxon>Bacteria</taxon>
        <taxon>Pseudomonadati</taxon>
        <taxon>Pseudomonadota</taxon>
        <taxon>Gammaproteobacteria</taxon>
        <taxon>Enterobacterales</taxon>
        <taxon>Enterobacteriaceae</taxon>
        <taxon>Escherichia</taxon>
    </lineage>
</organism>
<keyword id="KW-0067">ATP-binding</keyword>
<keyword id="KW-0997">Cell inner membrane</keyword>
<keyword id="KW-1003">Cell membrane</keyword>
<keyword id="KW-0406">Ion transport</keyword>
<keyword id="KW-0472">Membrane</keyword>
<keyword id="KW-0547">Nucleotide-binding</keyword>
<keyword id="KW-0630">Potassium</keyword>
<keyword id="KW-0633">Potassium transport</keyword>
<keyword id="KW-0812">Transmembrane</keyword>
<keyword id="KW-1133">Transmembrane helix</keyword>
<keyword id="KW-0813">Transport</keyword>
<protein>
    <recommendedName>
        <fullName evidence="1">Potassium-transporting ATPase KdpC subunit</fullName>
    </recommendedName>
    <alternativeName>
        <fullName evidence="1">ATP phosphohydrolase [potassium-transporting] C chain</fullName>
    </alternativeName>
    <alternativeName>
        <fullName evidence="1">Potassium-binding and translocating subunit C</fullName>
    </alternativeName>
    <alternativeName>
        <fullName evidence="1">Potassium-translocating ATPase C chain</fullName>
    </alternativeName>
</protein>
<proteinExistence type="inferred from homology"/>
<name>KDPC_ECO7I</name>
<evidence type="ECO:0000255" key="1">
    <source>
        <dbReference type="HAMAP-Rule" id="MF_00276"/>
    </source>
</evidence>
<gene>
    <name evidence="1" type="primary">kdpC</name>
    <name type="ordered locus">ECIAI39_0655</name>
</gene>
<feature type="chain" id="PRO_1000119353" description="Potassium-transporting ATPase KdpC subunit">
    <location>
        <begin position="1"/>
        <end position="190"/>
    </location>
</feature>
<feature type="transmembrane region" description="Helical" evidence="1">
    <location>
        <begin position="10"/>
        <end position="30"/>
    </location>
</feature>
<dbReference type="EMBL" id="CU928164">
    <property type="protein sequence ID" value="CAR16792.1"/>
    <property type="molecule type" value="Genomic_DNA"/>
</dbReference>
<dbReference type="RefSeq" id="WP_012602229.1">
    <property type="nucleotide sequence ID" value="NC_011750.1"/>
</dbReference>
<dbReference type="RefSeq" id="YP_002406681.1">
    <property type="nucleotide sequence ID" value="NC_011750.1"/>
</dbReference>
<dbReference type="SMR" id="B7NMP9"/>
<dbReference type="STRING" id="585057.ECIAI39_0655"/>
<dbReference type="KEGG" id="ect:ECIAI39_0655"/>
<dbReference type="PATRIC" id="fig|585057.6.peg.698"/>
<dbReference type="HOGENOM" id="CLU_077094_2_0_6"/>
<dbReference type="Proteomes" id="UP000000749">
    <property type="component" value="Chromosome"/>
</dbReference>
<dbReference type="GO" id="GO:0005886">
    <property type="term" value="C:plasma membrane"/>
    <property type="evidence" value="ECO:0007669"/>
    <property type="project" value="UniProtKB-SubCell"/>
</dbReference>
<dbReference type="GO" id="GO:0005524">
    <property type="term" value="F:ATP binding"/>
    <property type="evidence" value="ECO:0007669"/>
    <property type="project" value="UniProtKB-UniRule"/>
</dbReference>
<dbReference type="GO" id="GO:0008556">
    <property type="term" value="F:P-type potassium transmembrane transporter activity"/>
    <property type="evidence" value="ECO:0007669"/>
    <property type="project" value="InterPro"/>
</dbReference>
<dbReference type="HAMAP" id="MF_00276">
    <property type="entry name" value="KdpC"/>
    <property type="match status" value="1"/>
</dbReference>
<dbReference type="InterPro" id="IPR003820">
    <property type="entry name" value="KdpC"/>
</dbReference>
<dbReference type="NCBIfam" id="TIGR00681">
    <property type="entry name" value="kdpC"/>
    <property type="match status" value="1"/>
</dbReference>
<dbReference type="NCBIfam" id="NF001454">
    <property type="entry name" value="PRK00315.1"/>
    <property type="match status" value="1"/>
</dbReference>
<dbReference type="PANTHER" id="PTHR30042">
    <property type="entry name" value="POTASSIUM-TRANSPORTING ATPASE C CHAIN"/>
    <property type="match status" value="1"/>
</dbReference>
<dbReference type="PANTHER" id="PTHR30042:SF2">
    <property type="entry name" value="POTASSIUM-TRANSPORTING ATPASE KDPC SUBUNIT"/>
    <property type="match status" value="1"/>
</dbReference>
<dbReference type="Pfam" id="PF02669">
    <property type="entry name" value="KdpC"/>
    <property type="match status" value="1"/>
</dbReference>
<dbReference type="PIRSF" id="PIRSF001296">
    <property type="entry name" value="K_ATPase_KdpC"/>
    <property type="match status" value="1"/>
</dbReference>
<comment type="function">
    <text evidence="1">Part of the high-affinity ATP-driven potassium transport (or Kdp) system, which catalyzes the hydrolysis of ATP coupled with the electrogenic transport of potassium into the cytoplasm. This subunit acts as a catalytic chaperone that increases the ATP-binding affinity of the ATP-hydrolyzing subunit KdpB by the formation of a transient KdpB/KdpC/ATP ternary complex.</text>
</comment>
<comment type="subunit">
    <text evidence="1">The system is composed of three essential subunits: KdpA, KdpB and KdpC.</text>
</comment>
<comment type="subcellular location">
    <subcellularLocation>
        <location evidence="1">Cell inner membrane</location>
        <topology evidence="1">Single-pass membrane protein</topology>
    </subcellularLocation>
</comment>
<comment type="similarity">
    <text evidence="1">Belongs to the KdpC family.</text>
</comment>